<reference key="1">
    <citation type="journal article" date="2009" name="PLoS ONE">
        <title>Genome degradation in Brucella ovis corresponds with narrowing of its host range and tissue tropism.</title>
        <authorList>
            <person name="Tsolis R.M."/>
            <person name="Seshadri R."/>
            <person name="Santos R.L."/>
            <person name="Sangari F.J."/>
            <person name="Lobo J.M."/>
            <person name="de Jong M.F."/>
            <person name="Ren Q."/>
            <person name="Myers G."/>
            <person name="Brinkac L.M."/>
            <person name="Nelson W.C."/>
            <person name="Deboy R.T."/>
            <person name="Angiuoli S."/>
            <person name="Khouri H."/>
            <person name="Dimitrov G."/>
            <person name="Robinson J.R."/>
            <person name="Mulligan S."/>
            <person name="Walker R.L."/>
            <person name="Elzer P.E."/>
            <person name="Hassan K.A."/>
            <person name="Paulsen I.T."/>
        </authorList>
    </citation>
    <scope>NUCLEOTIDE SEQUENCE [LARGE SCALE GENOMIC DNA]</scope>
    <source>
        <strain>ATCC 25840 / 63/290 / NCTC 10512</strain>
    </source>
</reference>
<accession>A5VQX4</accession>
<organism>
    <name type="scientific">Brucella ovis (strain ATCC 25840 / 63/290 / NCTC 10512)</name>
    <dbReference type="NCBI Taxonomy" id="444178"/>
    <lineage>
        <taxon>Bacteria</taxon>
        <taxon>Pseudomonadati</taxon>
        <taxon>Pseudomonadota</taxon>
        <taxon>Alphaproteobacteria</taxon>
        <taxon>Hyphomicrobiales</taxon>
        <taxon>Brucellaceae</taxon>
        <taxon>Brucella/Ochrobactrum group</taxon>
        <taxon>Brucella</taxon>
    </lineage>
</organism>
<sequence length="885" mass="95625">MAGVNEIRSTFLDYFRKNGHEVVPSSPLVPRNDPTLMFTNAGMVQFKNVFTGLEHRSYNRATTSQKCVRAGGKHNDLDNVGYTARHHTFFEMLGNFSFGDYFKEDAISFAWNLITREFGLPKDKLLVTVYHTDDDAANFWKKIAGLSDDRIIRIPTSDNFWAMGDTGPCGPCSEIFYDHGDHIWGGPPGSPEEDGDRFIEIWNLVFMQFEQQTPELRIDLPRPSIDTGMGLERIAAVLQGVHDNYDIDLFKALIRASEEATGVKAEGDFRASHRVIADHLRASSFLIADGVLPSNEGRGYVLRRIMRRAMRHAQLLGAKEPLMWRLLPALIREMGQAYPELIRAESLISETLKLEETRFRKTLERGLGLLSDASENLAEGDRLDGETAFKLYDTYGFPLDLTQDALRQRGIAVDTEGFNVAMERQKAEARANWTGSGEAATETIWFGIKDKVGATEFLGYETESAEGVIASLVRDGVEVPSVREGETISVVVNQTPFYGESGGQQGDTGTISGEGFVIAVKDTQKKGEGVFVHIGEVTEGTAKAGDVVELKVDSARRTRIRSNHSATHLLHEALRETLGTHVAQKGSLVAPDRLRFDFSHPKPISAEELEAVENLANEIILQNAPVTTRLMAVDDAIAEGAMALFGEKYGDEVRVVSMGTAKHGSKAGKAYSVELCGGTHVRQTGDIGLVRIISEGGVAAGVRRLEALTGEAARLYLEEQDERVKAIASALKTTSADVLDHVNALIDERKKLERELADARKKLALGGGSSDGDSAVEAVNGVNFLGKIVTGVSPRDLKPLADEGKKQVGSGVVLFIGVGEDGKASAVAAVTEDMVGRFSAVDLVRAASAALGGAGGGGRPDMAQAGGPDGAKAADAIAAVKALIA</sequence>
<keyword id="KW-0030">Aminoacyl-tRNA synthetase</keyword>
<keyword id="KW-0067">ATP-binding</keyword>
<keyword id="KW-0963">Cytoplasm</keyword>
<keyword id="KW-0436">Ligase</keyword>
<keyword id="KW-0479">Metal-binding</keyword>
<keyword id="KW-0547">Nucleotide-binding</keyword>
<keyword id="KW-0648">Protein biosynthesis</keyword>
<keyword id="KW-0694">RNA-binding</keyword>
<keyword id="KW-0820">tRNA-binding</keyword>
<keyword id="KW-0862">Zinc</keyword>
<name>SYA_BRUO2</name>
<comment type="function">
    <text evidence="1">Catalyzes the attachment of alanine to tRNA(Ala) in a two-step reaction: alanine is first activated by ATP to form Ala-AMP and then transferred to the acceptor end of tRNA(Ala). Also edits incorrectly charged Ser-tRNA(Ala) and Gly-tRNA(Ala) via its editing domain.</text>
</comment>
<comment type="catalytic activity">
    <reaction evidence="1">
        <text>tRNA(Ala) + L-alanine + ATP = L-alanyl-tRNA(Ala) + AMP + diphosphate</text>
        <dbReference type="Rhea" id="RHEA:12540"/>
        <dbReference type="Rhea" id="RHEA-COMP:9657"/>
        <dbReference type="Rhea" id="RHEA-COMP:9923"/>
        <dbReference type="ChEBI" id="CHEBI:30616"/>
        <dbReference type="ChEBI" id="CHEBI:33019"/>
        <dbReference type="ChEBI" id="CHEBI:57972"/>
        <dbReference type="ChEBI" id="CHEBI:78442"/>
        <dbReference type="ChEBI" id="CHEBI:78497"/>
        <dbReference type="ChEBI" id="CHEBI:456215"/>
        <dbReference type="EC" id="6.1.1.7"/>
    </reaction>
</comment>
<comment type="cofactor">
    <cofactor evidence="1">
        <name>Zn(2+)</name>
        <dbReference type="ChEBI" id="CHEBI:29105"/>
    </cofactor>
    <text evidence="1">Binds 1 zinc ion per subunit.</text>
</comment>
<comment type="subcellular location">
    <subcellularLocation>
        <location evidence="1">Cytoplasm</location>
    </subcellularLocation>
</comment>
<comment type="domain">
    <text evidence="1">Consists of three domains; the N-terminal catalytic domain, the editing domain and the C-terminal C-Ala domain. The editing domain removes incorrectly charged amino acids, while the C-Ala domain, along with tRNA(Ala), serves as a bridge to cooperatively bring together the editing and aminoacylation centers thus stimulating deacylation of misacylated tRNAs.</text>
</comment>
<comment type="similarity">
    <text evidence="1">Belongs to the class-II aminoacyl-tRNA synthetase family.</text>
</comment>
<dbReference type="EC" id="6.1.1.7" evidence="1"/>
<dbReference type="EMBL" id="CP000708">
    <property type="protein sequence ID" value="ABQ61537.1"/>
    <property type="molecule type" value="Genomic_DNA"/>
</dbReference>
<dbReference type="RefSeq" id="WP_006012765.1">
    <property type="nucleotide sequence ID" value="NC_009505.1"/>
</dbReference>
<dbReference type="SMR" id="A5VQX4"/>
<dbReference type="GeneID" id="45124570"/>
<dbReference type="KEGG" id="bov:BOV_1164"/>
<dbReference type="HOGENOM" id="CLU_004485_1_1_5"/>
<dbReference type="PhylomeDB" id="A5VQX4"/>
<dbReference type="Proteomes" id="UP000006383">
    <property type="component" value="Chromosome I"/>
</dbReference>
<dbReference type="GO" id="GO:0005829">
    <property type="term" value="C:cytosol"/>
    <property type="evidence" value="ECO:0007669"/>
    <property type="project" value="TreeGrafter"/>
</dbReference>
<dbReference type="GO" id="GO:0004813">
    <property type="term" value="F:alanine-tRNA ligase activity"/>
    <property type="evidence" value="ECO:0007669"/>
    <property type="project" value="UniProtKB-UniRule"/>
</dbReference>
<dbReference type="GO" id="GO:0002161">
    <property type="term" value="F:aminoacyl-tRNA deacylase activity"/>
    <property type="evidence" value="ECO:0007669"/>
    <property type="project" value="TreeGrafter"/>
</dbReference>
<dbReference type="GO" id="GO:0005524">
    <property type="term" value="F:ATP binding"/>
    <property type="evidence" value="ECO:0007669"/>
    <property type="project" value="UniProtKB-UniRule"/>
</dbReference>
<dbReference type="GO" id="GO:0000049">
    <property type="term" value="F:tRNA binding"/>
    <property type="evidence" value="ECO:0007669"/>
    <property type="project" value="UniProtKB-KW"/>
</dbReference>
<dbReference type="GO" id="GO:0008270">
    <property type="term" value="F:zinc ion binding"/>
    <property type="evidence" value="ECO:0007669"/>
    <property type="project" value="UniProtKB-UniRule"/>
</dbReference>
<dbReference type="GO" id="GO:0006419">
    <property type="term" value="P:alanyl-tRNA aminoacylation"/>
    <property type="evidence" value="ECO:0007669"/>
    <property type="project" value="UniProtKB-UniRule"/>
</dbReference>
<dbReference type="GO" id="GO:0045892">
    <property type="term" value="P:negative regulation of DNA-templated transcription"/>
    <property type="evidence" value="ECO:0007669"/>
    <property type="project" value="TreeGrafter"/>
</dbReference>
<dbReference type="CDD" id="cd00673">
    <property type="entry name" value="AlaRS_core"/>
    <property type="match status" value="1"/>
</dbReference>
<dbReference type="FunFam" id="2.40.30.130:FF:000001">
    <property type="entry name" value="Alanine--tRNA ligase"/>
    <property type="match status" value="1"/>
</dbReference>
<dbReference type="FunFam" id="3.10.310.40:FF:000001">
    <property type="entry name" value="Alanine--tRNA ligase"/>
    <property type="match status" value="1"/>
</dbReference>
<dbReference type="FunFam" id="3.30.54.20:FF:000001">
    <property type="entry name" value="Alanine--tRNA ligase"/>
    <property type="match status" value="1"/>
</dbReference>
<dbReference type="FunFam" id="3.30.930.10:FF:000004">
    <property type="entry name" value="Alanine--tRNA ligase"/>
    <property type="match status" value="1"/>
</dbReference>
<dbReference type="FunFam" id="3.30.980.10:FF:000004">
    <property type="entry name" value="Alanine--tRNA ligase, cytoplasmic"/>
    <property type="match status" value="1"/>
</dbReference>
<dbReference type="Gene3D" id="2.40.30.130">
    <property type="match status" value="1"/>
</dbReference>
<dbReference type="Gene3D" id="3.10.310.40">
    <property type="match status" value="1"/>
</dbReference>
<dbReference type="Gene3D" id="3.30.54.20">
    <property type="match status" value="1"/>
</dbReference>
<dbReference type="Gene3D" id="6.10.250.550">
    <property type="match status" value="1"/>
</dbReference>
<dbReference type="Gene3D" id="3.30.930.10">
    <property type="entry name" value="Bira Bifunctional Protein, Domain 2"/>
    <property type="match status" value="1"/>
</dbReference>
<dbReference type="Gene3D" id="3.30.980.10">
    <property type="entry name" value="Threonyl-trna Synthetase, Chain A, domain 2"/>
    <property type="match status" value="1"/>
</dbReference>
<dbReference type="HAMAP" id="MF_00036_B">
    <property type="entry name" value="Ala_tRNA_synth_B"/>
    <property type="match status" value="1"/>
</dbReference>
<dbReference type="InterPro" id="IPR045864">
    <property type="entry name" value="aa-tRNA-synth_II/BPL/LPL"/>
</dbReference>
<dbReference type="InterPro" id="IPR002318">
    <property type="entry name" value="Ala-tRNA-lgiase_IIc"/>
</dbReference>
<dbReference type="InterPro" id="IPR018162">
    <property type="entry name" value="Ala-tRNA-ligase_IIc_anticod-bd"/>
</dbReference>
<dbReference type="InterPro" id="IPR018165">
    <property type="entry name" value="Ala-tRNA-synth_IIc_core"/>
</dbReference>
<dbReference type="InterPro" id="IPR018164">
    <property type="entry name" value="Ala-tRNA-synth_IIc_N"/>
</dbReference>
<dbReference type="InterPro" id="IPR050058">
    <property type="entry name" value="Ala-tRNA_ligase"/>
</dbReference>
<dbReference type="InterPro" id="IPR023033">
    <property type="entry name" value="Ala_tRNA_ligase_euk/bac"/>
</dbReference>
<dbReference type="InterPro" id="IPR003156">
    <property type="entry name" value="DHHA1_dom"/>
</dbReference>
<dbReference type="InterPro" id="IPR018163">
    <property type="entry name" value="Thr/Ala-tRNA-synth_IIc_edit"/>
</dbReference>
<dbReference type="InterPro" id="IPR009000">
    <property type="entry name" value="Transl_B-barrel_sf"/>
</dbReference>
<dbReference type="InterPro" id="IPR012947">
    <property type="entry name" value="tRNA_SAD"/>
</dbReference>
<dbReference type="NCBIfam" id="TIGR00344">
    <property type="entry name" value="alaS"/>
    <property type="match status" value="1"/>
</dbReference>
<dbReference type="PANTHER" id="PTHR11777:SF9">
    <property type="entry name" value="ALANINE--TRNA LIGASE, CYTOPLASMIC"/>
    <property type="match status" value="1"/>
</dbReference>
<dbReference type="PANTHER" id="PTHR11777">
    <property type="entry name" value="ALANYL-TRNA SYNTHETASE"/>
    <property type="match status" value="1"/>
</dbReference>
<dbReference type="Pfam" id="PF02272">
    <property type="entry name" value="DHHA1"/>
    <property type="match status" value="1"/>
</dbReference>
<dbReference type="Pfam" id="PF01411">
    <property type="entry name" value="tRNA-synt_2c"/>
    <property type="match status" value="1"/>
</dbReference>
<dbReference type="Pfam" id="PF07973">
    <property type="entry name" value="tRNA_SAD"/>
    <property type="match status" value="1"/>
</dbReference>
<dbReference type="PRINTS" id="PR00980">
    <property type="entry name" value="TRNASYNTHALA"/>
</dbReference>
<dbReference type="SMART" id="SM00863">
    <property type="entry name" value="tRNA_SAD"/>
    <property type="match status" value="1"/>
</dbReference>
<dbReference type="SUPFAM" id="SSF55681">
    <property type="entry name" value="Class II aaRS and biotin synthetases"/>
    <property type="match status" value="1"/>
</dbReference>
<dbReference type="SUPFAM" id="SSF101353">
    <property type="entry name" value="Putative anticodon-binding domain of alanyl-tRNA synthetase (AlaRS)"/>
    <property type="match status" value="1"/>
</dbReference>
<dbReference type="SUPFAM" id="SSF55186">
    <property type="entry name" value="ThrRS/AlaRS common domain"/>
    <property type="match status" value="1"/>
</dbReference>
<dbReference type="SUPFAM" id="SSF50447">
    <property type="entry name" value="Translation proteins"/>
    <property type="match status" value="1"/>
</dbReference>
<dbReference type="PROSITE" id="PS50860">
    <property type="entry name" value="AA_TRNA_LIGASE_II_ALA"/>
    <property type="match status" value="1"/>
</dbReference>
<feature type="chain" id="PRO_0000347516" description="Alanine--tRNA ligase">
    <location>
        <begin position="1"/>
        <end position="885"/>
    </location>
</feature>
<feature type="binding site" evidence="1">
    <location>
        <position position="564"/>
    </location>
    <ligand>
        <name>Zn(2+)</name>
        <dbReference type="ChEBI" id="CHEBI:29105"/>
    </ligand>
</feature>
<feature type="binding site" evidence="1">
    <location>
        <position position="568"/>
    </location>
    <ligand>
        <name>Zn(2+)</name>
        <dbReference type="ChEBI" id="CHEBI:29105"/>
    </ligand>
</feature>
<feature type="binding site" evidence="1">
    <location>
        <position position="676"/>
    </location>
    <ligand>
        <name>Zn(2+)</name>
        <dbReference type="ChEBI" id="CHEBI:29105"/>
    </ligand>
</feature>
<feature type="binding site" evidence="1">
    <location>
        <position position="680"/>
    </location>
    <ligand>
        <name>Zn(2+)</name>
        <dbReference type="ChEBI" id="CHEBI:29105"/>
    </ligand>
</feature>
<gene>
    <name evidence="1" type="primary">alaS</name>
    <name type="ordered locus">BOV_1164</name>
</gene>
<protein>
    <recommendedName>
        <fullName evidence="1">Alanine--tRNA ligase</fullName>
        <ecNumber evidence="1">6.1.1.7</ecNumber>
    </recommendedName>
    <alternativeName>
        <fullName evidence="1">Alanyl-tRNA synthetase</fullName>
        <shortName evidence="1">AlaRS</shortName>
    </alternativeName>
</protein>
<proteinExistence type="inferred from homology"/>
<evidence type="ECO:0000255" key="1">
    <source>
        <dbReference type="HAMAP-Rule" id="MF_00036"/>
    </source>
</evidence>